<dbReference type="EMBL" id="AF139541">
    <property type="protein sequence ID" value="AAP97270.1"/>
    <property type="molecule type" value="mRNA"/>
</dbReference>
<dbReference type="EMBL" id="AB096944">
    <property type="protein sequence ID" value="BAE46359.1"/>
    <property type="molecule type" value="mRNA"/>
</dbReference>
<dbReference type="CCDS" id="CCDS13596.1"/>
<dbReference type="RefSeq" id="NP_853640.1">
    <property type="nucleotide sequence ID" value="NM_181609.4"/>
</dbReference>
<dbReference type="BioGRID" id="130653">
    <property type="interactions" value="17"/>
</dbReference>
<dbReference type="FunCoup" id="Q7Z4W3">
    <property type="interactions" value="17"/>
</dbReference>
<dbReference type="IntAct" id="Q7Z4W3">
    <property type="interactions" value="17"/>
</dbReference>
<dbReference type="STRING" id="9606.ENSP00000386376"/>
<dbReference type="iPTMnet" id="Q7Z4W3"/>
<dbReference type="PhosphoSitePlus" id="Q7Z4W3"/>
<dbReference type="BioMuta" id="KRTAP19-3"/>
<dbReference type="DMDM" id="74750108"/>
<dbReference type="PaxDb" id="9606-ENSP00000386376"/>
<dbReference type="PeptideAtlas" id="Q7Z4W3"/>
<dbReference type="DNASU" id="337970"/>
<dbReference type="Ensembl" id="ENST00000334063.6">
    <property type="protein sequence ID" value="ENSP00000386376.2"/>
    <property type="gene ID" value="ENSG00000244025.5"/>
</dbReference>
<dbReference type="GeneID" id="337970"/>
<dbReference type="KEGG" id="hsa:337970"/>
<dbReference type="MANE-Select" id="ENST00000334063.6">
    <property type="protein sequence ID" value="ENSP00000386376.2"/>
    <property type="RefSeq nucleotide sequence ID" value="NM_181609.4"/>
    <property type="RefSeq protein sequence ID" value="NP_853640.1"/>
</dbReference>
<dbReference type="UCSC" id="uc002yog.2">
    <property type="organism name" value="human"/>
</dbReference>
<dbReference type="AGR" id="HGNC:18938"/>
<dbReference type="CTD" id="337970"/>
<dbReference type="GeneCards" id="KRTAP19-3"/>
<dbReference type="HGNC" id="HGNC:18938">
    <property type="gene designation" value="KRTAP19-3"/>
</dbReference>
<dbReference type="HPA" id="ENSG00000244025">
    <property type="expression patterns" value="Group enriched (skeletal muscle, skin)"/>
</dbReference>
<dbReference type="neXtProt" id="NX_Q7Z4W3"/>
<dbReference type="OpenTargets" id="ENSG00000244025"/>
<dbReference type="PharmGKB" id="PA134977711"/>
<dbReference type="VEuPathDB" id="HostDB:ENSG00000244025"/>
<dbReference type="eggNOG" id="ENOG502TDP7">
    <property type="taxonomic scope" value="Eukaryota"/>
</dbReference>
<dbReference type="GeneTree" id="ENSGT00950000183472"/>
<dbReference type="HOGENOM" id="CLU_184630_0_0_1"/>
<dbReference type="InParanoid" id="Q7Z4W3"/>
<dbReference type="OMA" id="YRSCHPS"/>
<dbReference type="PAN-GO" id="Q7Z4W3">
    <property type="GO annotations" value="0 GO annotations based on evolutionary models"/>
</dbReference>
<dbReference type="PathwayCommons" id="Q7Z4W3"/>
<dbReference type="Reactome" id="R-HSA-6805567">
    <property type="pathway name" value="Keratinization"/>
</dbReference>
<dbReference type="SignaLink" id="Q7Z4W3"/>
<dbReference type="BioGRID-ORCS" id="337970">
    <property type="hits" value="34 hits in 1034 CRISPR screens"/>
</dbReference>
<dbReference type="GenomeRNAi" id="337970"/>
<dbReference type="Pharos" id="Q7Z4W3">
    <property type="development level" value="Tdark"/>
</dbReference>
<dbReference type="PRO" id="PR:Q7Z4W3"/>
<dbReference type="Proteomes" id="UP000005640">
    <property type="component" value="Chromosome 21"/>
</dbReference>
<dbReference type="RNAct" id="Q7Z4W3">
    <property type="molecule type" value="protein"/>
</dbReference>
<dbReference type="Bgee" id="ENSG00000244025">
    <property type="expression patterns" value="Expressed in tibialis anterior and 38 other cell types or tissues"/>
</dbReference>
<dbReference type="GO" id="GO:0005829">
    <property type="term" value="C:cytosol"/>
    <property type="evidence" value="ECO:0000304"/>
    <property type="project" value="Reactome"/>
</dbReference>
<dbReference type="GO" id="GO:0005882">
    <property type="term" value="C:intermediate filament"/>
    <property type="evidence" value="ECO:0007669"/>
    <property type="project" value="UniProtKB-KW"/>
</dbReference>
<dbReference type="InterPro" id="IPR021743">
    <property type="entry name" value="KRTAP_type8/19/20/21/22"/>
</dbReference>
<dbReference type="InterPro" id="IPR051528">
    <property type="entry name" value="KRTAP_type_19"/>
</dbReference>
<dbReference type="PANTHER" id="PTHR38140:SF9">
    <property type="entry name" value="KERATIN-ASSOCIATED PROTEIN 19-3"/>
    <property type="match status" value="1"/>
</dbReference>
<dbReference type="PANTHER" id="PTHR38140">
    <property type="entry name" value="KERATIN-ASSOCIATED PROTEIN 19-3-RELATED"/>
    <property type="match status" value="1"/>
</dbReference>
<dbReference type="Pfam" id="PF11759">
    <property type="entry name" value="KRTAP"/>
    <property type="match status" value="1"/>
</dbReference>
<feature type="chain" id="PRO_0000223905" description="Keratin-associated protein 19-3">
    <location>
        <begin position="1"/>
        <end position="81"/>
    </location>
</feature>
<sequence>MSYYGSYYGGLGYGCGGFGGLGYGYGCGCGSFRRLGSGCGYGGYGYGSGFGGYGYGSGFGGYGYGCYRPSYYGGYGFSGFY</sequence>
<evidence type="ECO:0000250" key="1"/>
<evidence type="ECO:0000305" key="2"/>
<proteinExistence type="evidence at protein level"/>
<protein>
    <recommendedName>
        <fullName>Keratin-associated protein 19-3</fullName>
    </recommendedName>
    <alternativeName>
        <fullName>GTHRP</fullName>
    </alternativeName>
    <alternativeName>
        <fullName>Glycine/tyrosine-rich protein</fullName>
    </alternativeName>
</protein>
<name>KR193_HUMAN</name>
<accession>Q7Z4W3</accession>
<gene>
    <name type="primary">KRTAP19-3</name>
    <name type="synonym">KAP19.3</name>
</gene>
<comment type="function">
    <text>In the hair cortex, hair keratin intermediate filaments are embedded in an interfilamentous matrix, consisting of hair keratin-associated proteins (KRTAP), which are essential for the formation of a rigid and resistant hair shaft through their extensive disulfide bond cross-linking with abundant cysteine residues of hair keratins. The matrix proteins include the high-sulfur and high-glycine-tyrosine keratins.</text>
</comment>
<comment type="subunit">
    <text evidence="1">Interacts with hair keratins.</text>
</comment>
<comment type="interaction">
    <interactant intactId="EBI-12020132">
        <id>Q7Z4W3</id>
    </interactant>
    <interactant intactId="EBI-948603">
        <id>Q03989</id>
        <label>ARID5A</label>
    </interactant>
    <organismsDiffer>false</organismsDiffer>
    <experiments>3</experiments>
</comment>
<comment type="interaction">
    <interactant intactId="EBI-12020132">
        <id>Q7Z4W3</id>
    </interactant>
    <interactant intactId="EBI-11983447">
        <id>Q8N9W6-4</id>
        <label>BOLL</label>
    </interactant>
    <organismsDiffer>false</organismsDiffer>
    <experiments>3</experiments>
</comment>
<comment type="interaction">
    <interactant intactId="EBI-12020132">
        <id>Q7Z4W3</id>
    </interactant>
    <interactant intactId="EBI-1383687">
        <id>Q9UQM7</id>
        <label>CAMK2A</label>
    </interactant>
    <organismsDiffer>false</organismsDiffer>
    <experiments>3</experiments>
</comment>
<comment type="interaction">
    <interactant intactId="EBI-12020132">
        <id>Q7Z4W3</id>
    </interactant>
    <interactant intactId="EBI-11523526">
        <id>Q13554-3</id>
        <label>CAMK2B</label>
    </interactant>
    <organismsDiffer>false</organismsDiffer>
    <experiments>3</experiments>
</comment>
<comment type="interaction">
    <interactant intactId="EBI-12020132">
        <id>Q7Z4W3</id>
    </interactant>
    <interactant intactId="EBI-12020154">
        <id>Q13555-5</id>
        <label>CAMK2G</label>
    </interactant>
    <organismsDiffer>false</organismsDiffer>
    <experiments>3</experiments>
</comment>
<comment type="interaction">
    <interactant intactId="EBI-12020132">
        <id>Q7Z4W3</id>
    </interactant>
    <interactant intactId="EBI-10192698">
        <id>Q02930-3</id>
        <label>CREB5</label>
    </interactant>
    <organismsDiffer>false</organismsDiffer>
    <experiments>3</experiments>
</comment>
<comment type="interaction">
    <interactant intactId="EBI-12020132">
        <id>Q7Z4W3</id>
    </interactant>
    <interactant intactId="EBI-3867333">
        <id>A8MQ03</id>
        <label>CYSRT1</label>
    </interactant>
    <organismsDiffer>false</organismsDiffer>
    <experiments>3</experiments>
</comment>
<comment type="interaction">
    <interactant intactId="EBI-12020132">
        <id>Q7Z4W3</id>
    </interactant>
    <interactant intactId="EBI-724310">
        <id>Q15038</id>
        <label>DAZAP2</label>
    </interactant>
    <organismsDiffer>false</organismsDiffer>
    <experiments>6</experiments>
</comment>
<comment type="interaction">
    <interactant intactId="EBI-12020132">
        <id>Q7Z4W3</id>
    </interactant>
    <interactant intactId="EBI-7251368">
        <id>Q9BZE0</id>
        <label>GLIS2</label>
    </interactant>
    <organismsDiffer>false</organismsDiffer>
    <experiments>3</experiments>
</comment>
<comment type="interaction">
    <interactant intactId="EBI-12020132">
        <id>Q7Z4W3</id>
    </interactant>
    <interactant intactId="EBI-9088686">
        <id>Q14847-2</id>
        <label>LASP1</label>
    </interactant>
    <organismsDiffer>false</organismsDiffer>
    <experiments>3</experiments>
</comment>
<comment type="interaction">
    <interactant intactId="EBI-12020132">
        <id>Q7Z4W3</id>
    </interactant>
    <interactant intactId="EBI-2515597">
        <id>Q96HR8</id>
        <label>NAF1</label>
    </interactant>
    <organismsDiffer>false</organismsDiffer>
    <experiments>3</experiments>
</comment>
<comment type="interaction">
    <interactant intactId="EBI-12020132">
        <id>Q7Z4W3</id>
    </interactant>
    <interactant intactId="EBI-943588">
        <id>Q16633</id>
        <label>POU2AF1</label>
    </interactant>
    <organismsDiffer>false</organismsDiffer>
    <experiments>3</experiments>
</comment>
<comment type="interaction">
    <interactant intactId="EBI-12020132">
        <id>Q7Z4W3</id>
    </interactant>
    <interactant intactId="EBI-740343">
        <id>Q93062-3</id>
        <label>RBPMS</label>
    </interactant>
    <organismsDiffer>false</organismsDiffer>
    <experiments>3</experiments>
</comment>
<comment type="interaction">
    <interactant intactId="EBI-12020132">
        <id>Q7Z4W3</id>
    </interactant>
    <interactant intactId="EBI-12067698">
        <id>Q99954</id>
        <label>SMR3A</label>
    </interactant>
    <organismsDiffer>false</organismsDiffer>
    <experiments>3</experiments>
</comment>
<comment type="interaction">
    <interactant intactId="EBI-12020132">
        <id>Q7Z4W3</id>
    </interactant>
    <interactant intactId="EBI-357849">
        <id>Q15025</id>
        <label>TNIP1</label>
    </interactant>
    <organismsDiffer>false</organismsDiffer>
    <experiments>3</experiments>
</comment>
<comment type="interaction">
    <interactant intactId="EBI-12020132">
        <id>Q7Z4W3</id>
    </interactant>
    <interactant intactId="EBI-947187">
        <id>Q9UHD9</id>
        <label>UBQLN2</label>
    </interactant>
    <organismsDiffer>false</organismsDiffer>
    <experiments>3</experiments>
</comment>
<comment type="interaction">
    <interactant intactId="EBI-12020132">
        <id>Q7Z4W3</id>
    </interactant>
    <interactant intactId="EBI-2107455">
        <id>Q08AM6</id>
        <label>VAC14</label>
    </interactant>
    <organismsDiffer>false</organismsDiffer>
    <experiments>3</experiments>
</comment>
<comment type="similarity">
    <text evidence="2">Belongs to the KRTAP type 19 family.</text>
</comment>
<reference key="1">
    <citation type="submission" date="1999-03" db="EMBL/GenBank/DDBJ databases">
        <title>Cloning of a new human cDNA homologous to mouse glycine/tyrosine-rich hair protein.</title>
        <authorList>
            <person name="Zhou Y."/>
            <person name="Yu L."/>
            <person name="Zhao S.Y."/>
        </authorList>
    </citation>
    <scope>NUCLEOTIDE SEQUENCE [MRNA]</scope>
</reference>
<reference key="2">
    <citation type="submission" date="2002-11" db="EMBL/GenBank/DDBJ databases">
        <title>Identification of complete keratin-associated protein (KAP) gene cluster spanning 800 kb region on human chromosome 21q22.11.</title>
        <authorList>
            <person name="Obayashi I."/>
            <person name="Shibuya K."/>
            <person name="Minoshima S."/>
            <person name="Kudoh J."/>
            <person name="Shimizu N."/>
        </authorList>
    </citation>
    <scope>NUCLEOTIDE SEQUENCE [MRNA]</scope>
    <source>
        <tissue>Hair root</tissue>
    </source>
</reference>
<organism>
    <name type="scientific">Homo sapiens</name>
    <name type="common">Human</name>
    <dbReference type="NCBI Taxonomy" id="9606"/>
    <lineage>
        <taxon>Eukaryota</taxon>
        <taxon>Metazoa</taxon>
        <taxon>Chordata</taxon>
        <taxon>Craniata</taxon>
        <taxon>Vertebrata</taxon>
        <taxon>Euteleostomi</taxon>
        <taxon>Mammalia</taxon>
        <taxon>Eutheria</taxon>
        <taxon>Euarchontoglires</taxon>
        <taxon>Primates</taxon>
        <taxon>Haplorrhini</taxon>
        <taxon>Catarrhini</taxon>
        <taxon>Hominidae</taxon>
        <taxon>Homo</taxon>
    </lineage>
</organism>
<keyword id="KW-0416">Keratin</keyword>
<keyword id="KW-1185">Reference proteome</keyword>
<keyword id="KW-0677">Repeat</keyword>